<reference key="1">
    <citation type="journal article" date="2001" name="Lancet">
        <title>Whole genome sequencing of meticillin-resistant Staphylococcus aureus.</title>
        <authorList>
            <person name="Kuroda M."/>
            <person name="Ohta T."/>
            <person name="Uchiyama I."/>
            <person name="Baba T."/>
            <person name="Yuzawa H."/>
            <person name="Kobayashi I."/>
            <person name="Cui L."/>
            <person name="Oguchi A."/>
            <person name="Aoki K."/>
            <person name="Nagai Y."/>
            <person name="Lian J.-Q."/>
            <person name="Ito T."/>
            <person name="Kanamori M."/>
            <person name="Matsumaru H."/>
            <person name="Maruyama A."/>
            <person name="Murakami H."/>
            <person name="Hosoyama A."/>
            <person name="Mizutani-Ui Y."/>
            <person name="Takahashi N.K."/>
            <person name="Sawano T."/>
            <person name="Inoue R."/>
            <person name="Kaito C."/>
            <person name="Sekimizu K."/>
            <person name="Hirakawa H."/>
            <person name="Kuhara S."/>
            <person name="Goto S."/>
            <person name="Yabuzaki J."/>
            <person name="Kanehisa M."/>
            <person name="Yamashita A."/>
            <person name="Oshima K."/>
            <person name="Furuya K."/>
            <person name="Yoshino C."/>
            <person name="Shiba T."/>
            <person name="Hattori M."/>
            <person name="Ogasawara N."/>
            <person name="Hayashi H."/>
            <person name="Hiramatsu K."/>
        </authorList>
    </citation>
    <scope>NUCLEOTIDE SEQUENCE [LARGE SCALE GENOMIC DNA]</scope>
    <source>
        <strain>Mu50 / ATCC 700699</strain>
    </source>
</reference>
<comment type="function">
    <text evidence="1">Global regulator with both positive and negative effects that mediates modulation of several genes involved in virulence. Also, modulates the expression of genes not previously implicated in pathogenesis (By similarity).</text>
</comment>
<comment type="similarity">
    <text evidence="3">Belongs to the rot family.</text>
</comment>
<comment type="sequence caution" evidence="3">
    <conflict type="erroneous initiation">
        <sequence resource="EMBL-CDS" id="BAB57926"/>
    </conflict>
</comment>
<feature type="chain" id="PRO_0000220545" description="HTH-type transcriptional regulator rot">
    <location>
        <begin position="1"/>
        <end position="166"/>
    </location>
</feature>
<feature type="DNA-binding region" description="H-T-H motif" evidence="2">
    <location>
        <begin position="87"/>
        <end position="110"/>
    </location>
</feature>
<gene>
    <name type="primary">rot</name>
    <name type="ordered locus">SAV1764</name>
</gene>
<protein>
    <recommendedName>
        <fullName>HTH-type transcriptional regulator rot</fullName>
    </recommendedName>
    <alternativeName>
        <fullName>Repressor of toxins</fullName>
    </alternativeName>
</protein>
<dbReference type="EMBL" id="BA000017">
    <property type="protein sequence ID" value="BAB57926.1"/>
    <property type="status" value="ALT_INIT"/>
    <property type="molecule type" value="Genomic_DNA"/>
</dbReference>
<dbReference type="SMR" id="Q99TA4"/>
<dbReference type="KEGG" id="sav:SAV1764"/>
<dbReference type="HOGENOM" id="CLU_132118_0_0_9"/>
<dbReference type="PRO" id="PR:Q99TA4"/>
<dbReference type="Proteomes" id="UP000002481">
    <property type="component" value="Chromosome"/>
</dbReference>
<dbReference type="GO" id="GO:0003677">
    <property type="term" value="F:DNA binding"/>
    <property type="evidence" value="ECO:0007669"/>
    <property type="project" value="UniProtKB-KW"/>
</dbReference>
<dbReference type="GO" id="GO:0003700">
    <property type="term" value="F:DNA-binding transcription factor activity"/>
    <property type="evidence" value="ECO:0007669"/>
    <property type="project" value="InterPro"/>
</dbReference>
<dbReference type="GO" id="GO:0006950">
    <property type="term" value="P:response to stress"/>
    <property type="evidence" value="ECO:0007669"/>
    <property type="project" value="TreeGrafter"/>
</dbReference>
<dbReference type="FunFam" id="1.10.10.10:FF:000715">
    <property type="entry name" value="HTH-type transcriptional regulator rot"/>
    <property type="match status" value="1"/>
</dbReference>
<dbReference type="Gene3D" id="1.10.10.10">
    <property type="entry name" value="Winged helix-like DNA-binding domain superfamily/Winged helix DNA-binding domain"/>
    <property type="match status" value="1"/>
</dbReference>
<dbReference type="InterPro" id="IPR000835">
    <property type="entry name" value="HTH_MarR-typ"/>
</dbReference>
<dbReference type="InterPro" id="IPR039422">
    <property type="entry name" value="MarR/SlyA-like"/>
</dbReference>
<dbReference type="InterPro" id="IPR016998">
    <property type="entry name" value="Rot"/>
</dbReference>
<dbReference type="InterPro" id="IPR010166">
    <property type="entry name" value="SarA/Rot_dom"/>
</dbReference>
<dbReference type="InterPro" id="IPR055166">
    <property type="entry name" value="Transc_reg_Sar_Rot_HTH"/>
</dbReference>
<dbReference type="InterPro" id="IPR036388">
    <property type="entry name" value="WH-like_DNA-bd_sf"/>
</dbReference>
<dbReference type="InterPro" id="IPR036390">
    <property type="entry name" value="WH_DNA-bd_sf"/>
</dbReference>
<dbReference type="NCBIfam" id="TIGR01889">
    <property type="entry name" value="Staph_reg_Sar"/>
    <property type="match status" value="1"/>
</dbReference>
<dbReference type="PANTHER" id="PTHR33164:SF56">
    <property type="entry name" value="HTH-TYPE TRANSCRIPTIONAL REGULATOR MHQR"/>
    <property type="match status" value="1"/>
</dbReference>
<dbReference type="PANTHER" id="PTHR33164">
    <property type="entry name" value="TRANSCRIPTIONAL REGULATOR, MARR FAMILY"/>
    <property type="match status" value="1"/>
</dbReference>
<dbReference type="Pfam" id="PF22381">
    <property type="entry name" value="Staph_reg_Sar_Rot"/>
    <property type="match status" value="1"/>
</dbReference>
<dbReference type="PIRSF" id="PIRSF032474">
    <property type="entry name" value="TF_HTH_Rot"/>
    <property type="match status" value="1"/>
</dbReference>
<dbReference type="SMART" id="SM00347">
    <property type="entry name" value="HTH_MARR"/>
    <property type="match status" value="1"/>
</dbReference>
<dbReference type="SUPFAM" id="SSF46785">
    <property type="entry name" value="Winged helix' DNA-binding domain"/>
    <property type="match status" value="1"/>
</dbReference>
<keyword id="KW-0010">Activator</keyword>
<keyword id="KW-0238">DNA-binding</keyword>
<keyword id="KW-0678">Repressor</keyword>
<keyword id="KW-0804">Transcription</keyword>
<keyword id="KW-0805">Transcription regulation</keyword>
<keyword id="KW-0843">Virulence</keyword>
<organism>
    <name type="scientific">Staphylococcus aureus (strain Mu50 / ATCC 700699)</name>
    <dbReference type="NCBI Taxonomy" id="158878"/>
    <lineage>
        <taxon>Bacteria</taxon>
        <taxon>Bacillati</taxon>
        <taxon>Bacillota</taxon>
        <taxon>Bacilli</taxon>
        <taxon>Bacillales</taxon>
        <taxon>Staphylococcaceae</taxon>
        <taxon>Staphylococcus</taxon>
    </lineage>
</organism>
<evidence type="ECO:0000250" key="1"/>
<evidence type="ECO:0000255" key="2"/>
<evidence type="ECO:0000305" key="3"/>
<accession>Q99TA4</accession>
<sequence>MHKLAHTSFGIVGMFVNTCMVAKYVIINWEMFSMKKVNNDTVFGILQLETLLGDINSIFSEIESEYKMSREEILILLTLWQKGSMTLKEMDRFVEVKPYKRTRTYNNLVELEWIYKERPVDDERTVIIHFNEKLQQEKVELLNFISDAIASRATAMQNSLNAIIAV</sequence>
<proteinExistence type="inferred from homology"/>
<name>ROT_STAAM</name>